<dbReference type="EMBL" id="CP000964">
    <property type="protein sequence ID" value="ACI10325.1"/>
    <property type="molecule type" value="Genomic_DNA"/>
</dbReference>
<dbReference type="SMR" id="B5XXG3"/>
<dbReference type="ESTHER" id="klep7-y1077">
    <property type="family name" value="abh_upf00227"/>
</dbReference>
<dbReference type="KEGG" id="kpe:KPK_3451"/>
<dbReference type="HOGENOM" id="CLU_128769_0_0_6"/>
<dbReference type="BioCyc" id="KPNE507522:GI0B-3434-MONOMER"/>
<dbReference type="Proteomes" id="UP000001734">
    <property type="component" value="Chromosome"/>
</dbReference>
<dbReference type="FunFam" id="3.40.50.1820:FF:000007">
    <property type="entry name" value="UPF0227 protein YcfP"/>
    <property type="match status" value="1"/>
</dbReference>
<dbReference type="Gene3D" id="3.40.50.1820">
    <property type="entry name" value="alpha/beta hydrolase"/>
    <property type="match status" value="1"/>
</dbReference>
<dbReference type="HAMAP" id="MF_01047">
    <property type="entry name" value="UPF0227"/>
    <property type="match status" value="1"/>
</dbReference>
<dbReference type="InterPro" id="IPR029058">
    <property type="entry name" value="AB_hydrolase_fold"/>
</dbReference>
<dbReference type="InterPro" id="IPR022987">
    <property type="entry name" value="UPF0227"/>
</dbReference>
<dbReference type="InterPro" id="IPR008886">
    <property type="entry name" value="UPF0227/Esterase_YqiA"/>
</dbReference>
<dbReference type="NCBIfam" id="NF003431">
    <property type="entry name" value="PRK04940.1"/>
    <property type="match status" value="1"/>
</dbReference>
<dbReference type="PANTHER" id="PTHR35602">
    <property type="entry name" value="ESTERASE YQIA-RELATED"/>
    <property type="match status" value="1"/>
</dbReference>
<dbReference type="PANTHER" id="PTHR35602:SF2">
    <property type="entry name" value="UPF0227 PROTEIN YCFP"/>
    <property type="match status" value="1"/>
</dbReference>
<dbReference type="Pfam" id="PF05728">
    <property type="entry name" value="UPF0227"/>
    <property type="match status" value="1"/>
</dbReference>
<dbReference type="SUPFAM" id="SSF53474">
    <property type="entry name" value="alpha/beta-Hydrolases"/>
    <property type="match status" value="1"/>
</dbReference>
<organism>
    <name type="scientific">Klebsiella pneumoniae (strain 342)</name>
    <dbReference type="NCBI Taxonomy" id="507522"/>
    <lineage>
        <taxon>Bacteria</taxon>
        <taxon>Pseudomonadati</taxon>
        <taxon>Pseudomonadota</taxon>
        <taxon>Gammaproteobacteria</taxon>
        <taxon>Enterobacterales</taxon>
        <taxon>Enterobacteriaceae</taxon>
        <taxon>Klebsiella/Raoultella group</taxon>
        <taxon>Klebsiella</taxon>
        <taxon>Klebsiella pneumoniae complex</taxon>
    </lineage>
</organism>
<protein>
    <recommendedName>
        <fullName evidence="1">UPF0227 protein KPK_3451</fullName>
    </recommendedName>
</protein>
<sequence length="180" mass="21076">MIIYLHGFDSNSPGNHEKVMQLQFIDPDVRLISYSTRHPKHDMQHLLKEVDKMLQLTADDRPLICGVGLGGYWAERIGFLCDIRQAVFNPNLFPHENMEGKIDRPEEYADIATKCVTNFREKNRDRCLVVLSRQDEALDSQRSADLLHHYYEIIWDEEQTHKFKNISPHLQRLKAFKTLG</sequence>
<reference key="1">
    <citation type="journal article" date="2008" name="PLoS Genet.">
        <title>Complete genome sequence of the N2-fixing broad host range endophyte Klebsiella pneumoniae 342 and virulence predictions verified in mice.</title>
        <authorList>
            <person name="Fouts D.E."/>
            <person name="Tyler H.L."/>
            <person name="DeBoy R.T."/>
            <person name="Daugherty S."/>
            <person name="Ren Q."/>
            <person name="Badger J.H."/>
            <person name="Durkin A.S."/>
            <person name="Huot H."/>
            <person name="Shrivastava S."/>
            <person name="Kothari S."/>
            <person name="Dodson R.J."/>
            <person name="Mohamoud Y."/>
            <person name="Khouri H."/>
            <person name="Roesch L.F.W."/>
            <person name="Krogfelt K.A."/>
            <person name="Struve C."/>
            <person name="Triplett E.W."/>
            <person name="Methe B.A."/>
        </authorList>
    </citation>
    <scope>NUCLEOTIDE SEQUENCE [LARGE SCALE GENOMIC DNA]</scope>
    <source>
        <strain>342</strain>
    </source>
</reference>
<comment type="similarity">
    <text evidence="1">Belongs to the UPF0227 family.</text>
</comment>
<feature type="chain" id="PRO_1000136193" description="UPF0227 protein KPK_3451">
    <location>
        <begin position="1"/>
        <end position="180"/>
    </location>
</feature>
<name>Y3451_KLEP3</name>
<accession>B5XXG3</accession>
<evidence type="ECO:0000255" key="1">
    <source>
        <dbReference type="HAMAP-Rule" id="MF_01047"/>
    </source>
</evidence>
<proteinExistence type="inferred from homology"/>
<gene>
    <name type="ordered locus">KPK_3451</name>
</gene>